<protein>
    <recommendedName>
        <fullName evidence="1">Ubiquinone biosynthesis protein COQ4 homolog, mitochondrial</fullName>
    </recommendedName>
    <alternativeName>
        <fullName>4-hydroxy-3-methoxy-5-polyprenylbenzoate decarboxylase</fullName>
        <ecNumber evidence="1">4.1.1.130</ecNumber>
    </alternativeName>
    <alternativeName>
        <fullName evidence="1">Coenzyme Q biosynthesis protein 4 homolog</fullName>
    </alternativeName>
</protein>
<sequence length="271" mass="30429">MRGLPGAFLGSFKTSYGYLSQRLYGVLTEEKYDGRLYPSHIPTSTVQKAILAVGSGVAALKNPYRHDMVAVLGETTGHQTLIKLRDRMRNDPEGSTILLERPRIRLSTLDLSNMSALPDGTLGREYLRFLEENRVTPDTRAEVKFVDNEELAYVMQRYREVHDLLHTLLGMPTNMLGEVAVKWFEAAQTGLPMCILGAALGPLRLSVSRLQLLGQSLGLWALRNGGRARCVLSIYYERRWEQTLDELRHELNIEEPPVSLIASIKNSSSKS</sequence>
<name>COQ4_DANRE</name>
<accession>A9JR86</accession>
<accession>A2BFR6</accession>
<proteinExistence type="evidence at transcript level"/>
<feature type="chain" id="PRO_0000388053" description="Ubiquinone biosynthesis protein COQ4 homolog, mitochondrial">
    <location>
        <begin position="1"/>
        <end position="271"/>
    </location>
</feature>
<feature type="binding site" evidence="1">
    <location>
        <position position="162"/>
    </location>
    <ligand>
        <name>Zn(2+)</name>
        <dbReference type="ChEBI" id="CHEBI:29105"/>
    </ligand>
</feature>
<feature type="binding site" evidence="1">
    <location>
        <position position="163"/>
    </location>
    <ligand>
        <name>Zn(2+)</name>
        <dbReference type="ChEBI" id="CHEBI:29105"/>
    </ligand>
</feature>
<feature type="binding site" evidence="1">
    <location>
        <position position="166"/>
    </location>
    <ligand>
        <name>Zn(2+)</name>
        <dbReference type="ChEBI" id="CHEBI:29105"/>
    </ligand>
</feature>
<feature type="binding site" evidence="1">
    <location>
        <position position="178"/>
    </location>
    <ligand>
        <name>Zn(2+)</name>
        <dbReference type="ChEBI" id="CHEBI:29105"/>
    </ligand>
</feature>
<feature type="sequence conflict" description="In Ref. 2; CAM15135." evidence="2" ref="2">
    <original>S</original>
    <variation>SYYF</variation>
    <location>
        <position position="271"/>
    </location>
</feature>
<keyword id="KW-0456">Lyase</keyword>
<keyword id="KW-0472">Membrane</keyword>
<keyword id="KW-0479">Metal-binding</keyword>
<keyword id="KW-0496">Mitochondrion</keyword>
<keyword id="KW-0999">Mitochondrion inner membrane</keyword>
<keyword id="KW-1185">Reference proteome</keyword>
<keyword id="KW-0831">Ubiquinone biosynthesis</keyword>
<keyword id="KW-0862">Zinc</keyword>
<reference key="1">
    <citation type="submission" date="2007-12" db="EMBL/GenBank/DDBJ databases">
        <authorList>
            <consortium name="NIH - Zebrafish Gene Collection (ZGC) project"/>
        </authorList>
    </citation>
    <scope>NUCLEOTIDE SEQUENCE [LARGE SCALE MRNA]</scope>
    <source>
        <tissue>Eye</tissue>
    </source>
</reference>
<reference key="2">
    <citation type="journal article" date="2013" name="Nature">
        <title>The zebrafish reference genome sequence and its relationship to the human genome.</title>
        <authorList>
            <person name="Howe K."/>
            <person name="Clark M.D."/>
            <person name="Torroja C.F."/>
            <person name="Torrance J."/>
            <person name="Berthelot C."/>
            <person name="Muffato M."/>
            <person name="Collins J.E."/>
            <person name="Humphray S."/>
            <person name="McLaren K."/>
            <person name="Matthews L."/>
            <person name="McLaren S."/>
            <person name="Sealy I."/>
            <person name="Caccamo M."/>
            <person name="Churcher C."/>
            <person name="Scott C."/>
            <person name="Barrett J.C."/>
            <person name="Koch R."/>
            <person name="Rauch G.J."/>
            <person name="White S."/>
            <person name="Chow W."/>
            <person name="Kilian B."/>
            <person name="Quintais L.T."/>
            <person name="Guerra-Assuncao J.A."/>
            <person name="Zhou Y."/>
            <person name="Gu Y."/>
            <person name="Yen J."/>
            <person name="Vogel J.H."/>
            <person name="Eyre T."/>
            <person name="Redmond S."/>
            <person name="Banerjee R."/>
            <person name="Chi J."/>
            <person name="Fu B."/>
            <person name="Langley E."/>
            <person name="Maguire S.F."/>
            <person name="Laird G.K."/>
            <person name="Lloyd D."/>
            <person name="Kenyon E."/>
            <person name="Donaldson S."/>
            <person name="Sehra H."/>
            <person name="Almeida-King J."/>
            <person name="Loveland J."/>
            <person name="Trevanion S."/>
            <person name="Jones M."/>
            <person name="Quail M."/>
            <person name="Willey D."/>
            <person name="Hunt A."/>
            <person name="Burton J."/>
            <person name="Sims S."/>
            <person name="McLay K."/>
            <person name="Plumb B."/>
            <person name="Davis J."/>
            <person name="Clee C."/>
            <person name="Oliver K."/>
            <person name="Clark R."/>
            <person name="Riddle C."/>
            <person name="Elliot D."/>
            <person name="Threadgold G."/>
            <person name="Harden G."/>
            <person name="Ware D."/>
            <person name="Begum S."/>
            <person name="Mortimore B."/>
            <person name="Kerry G."/>
            <person name="Heath P."/>
            <person name="Phillimore B."/>
            <person name="Tracey A."/>
            <person name="Corby N."/>
            <person name="Dunn M."/>
            <person name="Johnson C."/>
            <person name="Wood J."/>
            <person name="Clark S."/>
            <person name="Pelan S."/>
            <person name="Griffiths G."/>
            <person name="Smith M."/>
            <person name="Glithero R."/>
            <person name="Howden P."/>
            <person name="Barker N."/>
            <person name="Lloyd C."/>
            <person name="Stevens C."/>
            <person name="Harley J."/>
            <person name="Holt K."/>
            <person name="Panagiotidis G."/>
            <person name="Lovell J."/>
            <person name="Beasley H."/>
            <person name="Henderson C."/>
            <person name="Gordon D."/>
            <person name="Auger K."/>
            <person name="Wright D."/>
            <person name="Collins J."/>
            <person name="Raisen C."/>
            <person name="Dyer L."/>
            <person name="Leung K."/>
            <person name="Robertson L."/>
            <person name="Ambridge K."/>
            <person name="Leongamornlert D."/>
            <person name="McGuire S."/>
            <person name="Gilderthorp R."/>
            <person name="Griffiths C."/>
            <person name="Manthravadi D."/>
            <person name="Nichol S."/>
            <person name="Barker G."/>
            <person name="Whitehead S."/>
            <person name="Kay M."/>
            <person name="Brown J."/>
            <person name="Murnane C."/>
            <person name="Gray E."/>
            <person name="Humphries M."/>
            <person name="Sycamore N."/>
            <person name="Barker D."/>
            <person name="Saunders D."/>
            <person name="Wallis J."/>
            <person name="Babbage A."/>
            <person name="Hammond S."/>
            <person name="Mashreghi-Mohammadi M."/>
            <person name="Barr L."/>
            <person name="Martin S."/>
            <person name="Wray P."/>
            <person name="Ellington A."/>
            <person name="Matthews N."/>
            <person name="Ellwood M."/>
            <person name="Woodmansey R."/>
            <person name="Clark G."/>
            <person name="Cooper J."/>
            <person name="Tromans A."/>
            <person name="Grafham D."/>
            <person name="Skuce C."/>
            <person name="Pandian R."/>
            <person name="Andrews R."/>
            <person name="Harrison E."/>
            <person name="Kimberley A."/>
            <person name="Garnett J."/>
            <person name="Fosker N."/>
            <person name="Hall R."/>
            <person name="Garner P."/>
            <person name="Kelly D."/>
            <person name="Bird C."/>
            <person name="Palmer S."/>
            <person name="Gehring I."/>
            <person name="Berger A."/>
            <person name="Dooley C.M."/>
            <person name="Ersan-Urun Z."/>
            <person name="Eser C."/>
            <person name="Geiger H."/>
            <person name="Geisler M."/>
            <person name="Karotki L."/>
            <person name="Kirn A."/>
            <person name="Konantz J."/>
            <person name="Konantz M."/>
            <person name="Oberlander M."/>
            <person name="Rudolph-Geiger S."/>
            <person name="Teucke M."/>
            <person name="Lanz C."/>
            <person name="Raddatz G."/>
            <person name="Osoegawa K."/>
            <person name="Zhu B."/>
            <person name="Rapp A."/>
            <person name="Widaa S."/>
            <person name="Langford C."/>
            <person name="Yang F."/>
            <person name="Schuster S.C."/>
            <person name="Carter N.P."/>
            <person name="Harrow J."/>
            <person name="Ning Z."/>
            <person name="Herrero J."/>
            <person name="Searle S.M."/>
            <person name="Enright A."/>
            <person name="Geisler R."/>
            <person name="Plasterk R.H."/>
            <person name="Lee C."/>
            <person name="Westerfield M."/>
            <person name="de Jong P.J."/>
            <person name="Zon L.I."/>
            <person name="Postlethwait J.H."/>
            <person name="Nusslein-Volhard C."/>
            <person name="Hubbard T.J."/>
            <person name="Roest Crollius H."/>
            <person name="Rogers J."/>
            <person name="Stemple D.L."/>
        </authorList>
    </citation>
    <scope>NUCLEOTIDE SEQUENCE [LARGE SCALE GENOMIC DNA]</scope>
    <source>
        <strain>Tuebingen</strain>
    </source>
</reference>
<gene>
    <name type="primary">coq4</name>
    <name type="ORF">si:dkey-170o10.3</name>
</gene>
<dbReference type="EC" id="4.1.1.130" evidence="1"/>
<dbReference type="EMBL" id="BC155557">
    <property type="protein sequence ID" value="AAI55558.1"/>
    <property type="molecule type" value="mRNA"/>
</dbReference>
<dbReference type="EMBL" id="BX294186">
    <property type="protein sequence ID" value="CAM15135.1"/>
    <property type="status" value="ALT_SEQ"/>
    <property type="molecule type" value="Genomic_DNA"/>
</dbReference>
<dbReference type="RefSeq" id="NP_001108192.1">
    <property type="nucleotide sequence ID" value="NM_001114720.1"/>
</dbReference>
<dbReference type="SMR" id="A9JR86"/>
<dbReference type="FunCoup" id="A9JR86">
    <property type="interactions" value="1714"/>
</dbReference>
<dbReference type="STRING" id="7955.ENSDARP00000140019"/>
<dbReference type="PaxDb" id="7955-ENSDARP00000118229"/>
<dbReference type="PeptideAtlas" id="A9JR86"/>
<dbReference type="GeneID" id="100137123"/>
<dbReference type="KEGG" id="dre:100137123"/>
<dbReference type="AGR" id="ZFIN:ZDB-GENE-060526-218"/>
<dbReference type="CTD" id="51117"/>
<dbReference type="ZFIN" id="ZDB-GENE-060526-218">
    <property type="gene designation" value="coq4"/>
</dbReference>
<dbReference type="eggNOG" id="KOG3244">
    <property type="taxonomic scope" value="Eukaryota"/>
</dbReference>
<dbReference type="InParanoid" id="A9JR86"/>
<dbReference type="OrthoDB" id="4249at2759"/>
<dbReference type="PhylomeDB" id="A9JR86"/>
<dbReference type="TreeFam" id="TF314625"/>
<dbReference type="Reactome" id="R-DRE-2142789">
    <property type="pathway name" value="Ubiquinol biosynthesis"/>
</dbReference>
<dbReference type="UniPathway" id="UPA00232"/>
<dbReference type="PRO" id="PR:A9JR86"/>
<dbReference type="Proteomes" id="UP000000437">
    <property type="component" value="Chromosome 5"/>
</dbReference>
<dbReference type="GO" id="GO:0031314">
    <property type="term" value="C:extrinsic component of mitochondrial inner membrane"/>
    <property type="evidence" value="ECO:0007669"/>
    <property type="project" value="UniProtKB-UniRule"/>
</dbReference>
<dbReference type="GO" id="GO:0005739">
    <property type="term" value="C:mitochondrion"/>
    <property type="evidence" value="ECO:0000318"/>
    <property type="project" value="GO_Central"/>
</dbReference>
<dbReference type="GO" id="GO:0120539">
    <property type="term" value="F:4-hydroxy-3-methoxy-5-polyprenylbenzoate decarboxylase activity"/>
    <property type="evidence" value="ECO:0000250"/>
    <property type="project" value="UniProtKB"/>
</dbReference>
<dbReference type="GO" id="GO:0006744">
    <property type="term" value="P:ubiquinone biosynthetic process"/>
    <property type="evidence" value="ECO:0000250"/>
    <property type="project" value="UniProtKB"/>
</dbReference>
<dbReference type="HAMAP" id="MF_03111">
    <property type="entry name" value="Coq4"/>
    <property type="match status" value="1"/>
</dbReference>
<dbReference type="InterPro" id="IPR007715">
    <property type="entry name" value="Coq4"/>
</dbReference>
<dbReference type="InterPro" id="IPR027540">
    <property type="entry name" value="Coq4_euk"/>
</dbReference>
<dbReference type="PANTHER" id="PTHR12922">
    <property type="entry name" value="UBIQUINONE BIOSYNTHESIS PROTEIN"/>
    <property type="match status" value="1"/>
</dbReference>
<dbReference type="PANTHER" id="PTHR12922:SF7">
    <property type="entry name" value="UBIQUINONE BIOSYNTHESIS PROTEIN COQ4 HOMOLOG, MITOCHONDRIAL"/>
    <property type="match status" value="1"/>
</dbReference>
<dbReference type="Pfam" id="PF05019">
    <property type="entry name" value="Coq4"/>
    <property type="match status" value="1"/>
</dbReference>
<comment type="function">
    <text evidence="1">Lyase that catalyzes the C1-decarboxylation of 4-hydroxy-3-methoxy-5-(all-trans-polyprenyl)benzoic acid into 2-methoxy-6-(all-trans-polyprenyl)phenol during ubiquinone biosynthesis.</text>
</comment>
<comment type="catalytic activity">
    <reaction evidence="1">
        <text>a 4-hydroxy-3-methoxy-5-(all-trans-polyprenyl)benzoate + H(+) = a 2-methoxy-6-(all-trans-polyprenyl)phenol + CO2</text>
        <dbReference type="Rhea" id="RHEA:81179"/>
        <dbReference type="Rhea" id="RHEA-COMP:9551"/>
        <dbReference type="Rhea" id="RHEA-COMP:10931"/>
        <dbReference type="ChEBI" id="CHEBI:15378"/>
        <dbReference type="ChEBI" id="CHEBI:16526"/>
        <dbReference type="ChEBI" id="CHEBI:62731"/>
        <dbReference type="ChEBI" id="CHEBI:84443"/>
        <dbReference type="EC" id="4.1.1.130"/>
    </reaction>
</comment>
<comment type="cofactor">
    <cofactor evidence="1">
        <name>Zn(2+)</name>
        <dbReference type="ChEBI" id="CHEBI:29105"/>
    </cofactor>
</comment>
<comment type="pathway">
    <text evidence="1">Cofactor biosynthesis; ubiquinone biosynthesis.</text>
</comment>
<comment type="subunit">
    <text evidence="1">Component of a multi-subunit COQ enzyme complex, composed of at least coq3, coq4, coq5, coq6, coq7 and coq9.</text>
</comment>
<comment type="subcellular location">
    <subcellularLocation>
        <location evidence="1">Mitochondrion inner membrane</location>
        <topology evidence="1">Peripheral membrane protein</topology>
        <orientation evidence="1">Matrix side</orientation>
    </subcellularLocation>
</comment>
<comment type="miscellaneous">
    <text evidence="1">This protein may be expected to contain an N-terminal transit peptide but none has been predicted.</text>
</comment>
<comment type="similarity">
    <text evidence="1">Belongs to the COQ4 family.</text>
</comment>
<comment type="sequence caution" evidence="2">
    <conflict type="erroneous gene model prediction">
        <sequence resource="EMBL-CDS" id="CAM15135"/>
    </conflict>
</comment>
<organism>
    <name type="scientific">Danio rerio</name>
    <name type="common">Zebrafish</name>
    <name type="synonym">Brachydanio rerio</name>
    <dbReference type="NCBI Taxonomy" id="7955"/>
    <lineage>
        <taxon>Eukaryota</taxon>
        <taxon>Metazoa</taxon>
        <taxon>Chordata</taxon>
        <taxon>Craniata</taxon>
        <taxon>Vertebrata</taxon>
        <taxon>Euteleostomi</taxon>
        <taxon>Actinopterygii</taxon>
        <taxon>Neopterygii</taxon>
        <taxon>Teleostei</taxon>
        <taxon>Ostariophysi</taxon>
        <taxon>Cypriniformes</taxon>
        <taxon>Danionidae</taxon>
        <taxon>Danioninae</taxon>
        <taxon>Danio</taxon>
    </lineage>
</organism>
<evidence type="ECO:0000255" key="1">
    <source>
        <dbReference type="HAMAP-Rule" id="MF_03111"/>
    </source>
</evidence>
<evidence type="ECO:0000305" key="2"/>